<name>RL36_ANAMM</name>
<organism>
    <name type="scientific">Anaplasma marginale (strain St. Maries)</name>
    <dbReference type="NCBI Taxonomy" id="234826"/>
    <lineage>
        <taxon>Bacteria</taxon>
        <taxon>Pseudomonadati</taxon>
        <taxon>Pseudomonadota</taxon>
        <taxon>Alphaproteobacteria</taxon>
        <taxon>Rickettsiales</taxon>
        <taxon>Anaplasmataceae</taxon>
        <taxon>Anaplasma</taxon>
    </lineage>
</organism>
<dbReference type="EMBL" id="CP000030">
    <property type="protein sequence ID" value="AAV86599.1"/>
    <property type="status" value="ALT_INIT"/>
    <property type="molecule type" value="Genomic_DNA"/>
</dbReference>
<dbReference type="SMR" id="Q5PAT1"/>
<dbReference type="KEGG" id="ama:AM593"/>
<dbReference type="HOGENOM" id="CLU_135723_3_2_5"/>
<dbReference type="GO" id="GO:1990904">
    <property type="term" value="C:ribonucleoprotein complex"/>
    <property type="evidence" value="ECO:0007669"/>
    <property type="project" value="UniProtKB-KW"/>
</dbReference>
<dbReference type="GO" id="GO:0005840">
    <property type="term" value="C:ribosome"/>
    <property type="evidence" value="ECO:0007669"/>
    <property type="project" value="UniProtKB-KW"/>
</dbReference>
<dbReference type="GO" id="GO:0003735">
    <property type="term" value="F:structural constituent of ribosome"/>
    <property type="evidence" value="ECO:0007669"/>
    <property type="project" value="InterPro"/>
</dbReference>
<dbReference type="GO" id="GO:0006412">
    <property type="term" value="P:translation"/>
    <property type="evidence" value="ECO:0007669"/>
    <property type="project" value="UniProtKB-UniRule"/>
</dbReference>
<dbReference type="HAMAP" id="MF_00251">
    <property type="entry name" value="Ribosomal_bL36"/>
    <property type="match status" value="1"/>
</dbReference>
<dbReference type="InterPro" id="IPR000473">
    <property type="entry name" value="Ribosomal_bL36"/>
</dbReference>
<dbReference type="InterPro" id="IPR035977">
    <property type="entry name" value="Ribosomal_bL36_sp"/>
</dbReference>
<dbReference type="InterPro" id="IPR047621">
    <property type="entry name" value="Ribosomal_L36_bact"/>
</dbReference>
<dbReference type="NCBIfam" id="NF002021">
    <property type="entry name" value="PRK00831.1"/>
    <property type="match status" value="1"/>
</dbReference>
<dbReference type="NCBIfam" id="TIGR01022">
    <property type="entry name" value="rpmJ_bact"/>
    <property type="match status" value="1"/>
</dbReference>
<dbReference type="PANTHER" id="PTHR47781">
    <property type="entry name" value="50S RIBOSOMAL PROTEIN L36 2"/>
    <property type="match status" value="1"/>
</dbReference>
<dbReference type="PANTHER" id="PTHR47781:SF1">
    <property type="entry name" value="LARGE RIBOSOMAL SUBUNIT PROTEIN BL36B"/>
    <property type="match status" value="1"/>
</dbReference>
<dbReference type="Pfam" id="PF00444">
    <property type="entry name" value="Ribosomal_L36"/>
    <property type="match status" value="1"/>
</dbReference>
<dbReference type="SUPFAM" id="SSF57840">
    <property type="entry name" value="Ribosomal protein L36"/>
    <property type="match status" value="1"/>
</dbReference>
<dbReference type="PROSITE" id="PS00828">
    <property type="entry name" value="RIBOSOMAL_L36"/>
    <property type="match status" value="1"/>
</dbReference>
<comment type="similarity">
    <text evidence="1">Belongs to the bacterial ribosomal protein bL36 family.</text>
</comment>
<comment type="sequence caution" evidence="2">
    <conflict type="erroneous initiation">
        <sequence resource="EMBL-CDS" id="AAV86599"/>
    </conflict>
</comment>
<keyword id="KW-0687">Ribonucleoprotein</keyword>
<keyword id="KW-0689">Ribosomal protein</keyword>
<sequence length="42" mass="4998">MKVMGSLKSAKSRDRDCKIVRRKGRIYVINKKKPRFKARQGY</sequence>
<proteinExistence type="inferred from homology"/>
<protein>
    <recommendedName>
        <fullName evidence="1">Large ribosomal subunit protein bL36</fullName>
    </recommendedName>
    <alternativeName>
        <fullName evidence="2">50S ribosomal protein L36</fullName>
    </alternativeName>
</protein>
<evidence type="ECO:0000255" key="1">
    <source>
        <dbReference type="HAMAP-Rule" id="MF_00251"/>
    </source>
</evidence>
<evidence type="ECO:0000305" key="2"/>
<reference key="1">
    <citation type="journal article" date="2005" name="Proc. Natl. Acad. Sci. U.S.A.">
        <title>Complete genome sequencing of Anaplasma marginale reveals that the surface is skewed to two superfamilies of outer membrane proteins.</title>
        <authorList>
            <person name="Brayton K.A."/>
            <person name="Kappmeyer L.S."/>
            <person name="Herndon D.R."/>
            <person name="Dark M.J."/>
            <person name="Tibbals D.L."/>
            <person name="Palmer G.H."/>
            <person name="McGuire T.C."/>
            <person name="Knowles D.P. Jr."/>
        </authorList>
    </citation>
    <scope>NUCLEOTIDE SEQUENCE [LARGE SCALE GENOMIC DNA]</scope>
    <source>
        <strain>St. Maries</strain>
    </source>
</reference>
<gene>
    <name evidence="1" type="primary">rpmJ</name>
    <name type="ordered locus">AM593</name>
</gene>
<accession>Q5PAT1</accession>
<feature type="chain" id="PRO_0000344640" description="Large ribosomal subunit protein bL36">
    <location>
        <begin position="1"/>
        <end position="42"/>
    </location>
</feature>